<organism>
    <name type="scientific">Shigella flexneri</name>
    <dbReference type="NCBI Taxonomy" id="623"/>
    <lineage>
        <taxon>Bacteria</taxon>
        <taxon>Pseudomonadati</taxon>
        <taxon>Pseudomonadota</taxon>
        <taxon>Gammaproteobacteria</taxon>
        <taxon>Enterobacterales</taxon>
        <taxon>Enterobacteriaceae</taxon>
        <taxon>Shigella</taxon>
    </lineage>
</organism>
<proteinExistence type="inferred from homology"/>
<keyword id="KW-0997">Cell inner membrane</keyword>
<keyword id="KW-1003">Cell membrane</keyword>
<keyword id="KW-0472">Membrane</keyword>
<keyword id="KW-1185">Reference proteome</keyword>
<keyword id="KW-0762">Sugar transport</keyword>
<keyword id="KW-0812">Transmembrane</keyword>
<keyword id="KW-1133">Transmembrane helix</keyword>
<keyword id="KW-0813">Transport</keyword>
<evidence type="ECO:0000250" key="1"/>
<evidence type="ECO:0000255" key="2"/>
<evidence type="ECO:0000305" key="3"/>
<gene>
    <name type="primary">xylH</name>
    <name type="ordered locus">SF3612</name>
    <name type="ordered locus">S4157</name>
</gene>
<protein>
    <recommendedName>
        <fullName>Xylose transport system permease protein XylH</fullName>
    </recommendedName>
</protein>
<reference key="1">
    <citation type="journal article" date="2002" name="Nucleic Acids Res.">
        <title>Genome sequence of Shigella flexneri 2a: insights into pathogenicity through comparison with genomes of Escherichia coli K12 and O157.</title>
        <authorList>
            <person name="Jin Q."/>
            <person name="Yuan Z."/>
            <person name="Xu J."/>
            <person name="Wang Y."/>
            <person name="Shen Y."/>
            <person name="Lu W."/>
            <person name="Wang J."/>
            <person name="Liu H."/>
            <person name="Yang J."/>
            <person name="Yang F."/>
            <person name="Zhang X."/>
            <person name="Zhang J."/>
            <person name="Yang G."/>
            <person name="Wu H."/>
            <person name="Qu D."/>
            <person name="Dong J."/>
            <person name="Sun L."/>
            <person name="Xue Y."/>
            <person name="Zhao A."/>
            <person name="Gao Y."/>
            <person name="Zhu J."/>
            <person name="Kan B."/>
            <person name="Ding K."/>
            <person name="Chen S."/>
            <person name="Cheng H."/>
            <person name="Yao Z."/>
            <person name="He B."/>
            <person name="Chen R."/>
            <person name="Ma D."/>
            <person name="Qiang B."/>
            <person name="Wen Y."/>
            <person name="Hou Y."/>
            <person name="Yu J."/>
        </authorList>
    </citation>
    <scope>NUCLEOTIDE SEQUENCE [LARGE SCALE GENOMIC DNA]</scope>
    <source>
        <strain>301 / Serotype 2a</strain>
    </source>
</reference>
<reference key="2">
    <citation type="journal article" date="2003" name="Infect. Immun.">
        <title>Complete genome sequence and comparative genomics of Shigella flexneri serotype 2a strain 2457T.</title>
        <authorList>
            <person name="Wei J."/>
            <person name="Goldberg M.B."/>
            <person name="Burland V."/>
            <person name="Venkatesan M.M."/>
            <person name="Deng W."/>
            <person name="Fournier G."/>
            <person name="Mayhew G.F."/>
            <person name="Plunkett G. III"/>
            <person name="Rose D.J."/>
            <person name="Darling A."/>
            <person name="Mau B."/>
            <person name="Perna N.T."/>
            <person name="Payne S.M."/>
            <person name="Runyen-Janecky L.J."/>
            <person name="Zhou S."/>
            <person name="Schwartz D.C."/>
            <person name="Blattner F.R."/>
        </authorList>
    </citation>
    <scope>NUCLEOTIDE SEQUENCE [LARGE SCALE GENOMIC DNA]</scope>
    <source>
        <strain>ATCC 700930 / 2457T / Serotype 2a</strain>
    </source>
</reference>
<dbReference type="EMBL" id="AE005674">
    <property type="protein sequence ID" value="AAN45061.1"/>
    <property type="molecule type" value="Genomic_DNA"/>
</dbReference>
<dbReference type="EMBL" id="AE014073">
    <property type="protein sequence ID" value="AAP19128.1"/>
    <property type="molecule type" value="Genomic_DNA"/>
</dbReference>
<dbReference type="RefSeq" id="NP_709354.1">
    <property type="nucleotide sequence ID" value="NC_004337.2"/>
</dbReference>
<dbReference type="RefSeq" id="WP_000045978.1">
    <property type="nucleotide sequence ID" value="NZ_WPGW01000060.1"/>
</dbReference>
<dbReference type="STRING" id="198214.SF3612"/>
<dbReference type="PaxDb" id="198214-SF3612"/>
<dbReference type="GeneID" id="1026301"/>
<dbReference type="KEGG" id="sfl:SF3612"/>
<dbReference type="KEGG" id="sfx:S4157"/>
<dbReference type="PATRIC" id="fig|198214.7.peg.4264"/>
<dbReference type="HOGENOM" id="CLU_028880_2_0_6"/>
<dbReference type="Proteomes" id="UP000001006">
    <property type="component" value="Chromosome"/>
</dbReference>
<dbReference type="Proteomes" id="UP000002673">
    <property type="component" value="Chromosome"/>
</dbReference>
<dbReference type="GO" id="GO:0005886">
    <property type="term" value="C:plasma membrane"/>
    <property type="evidence" value="ECO:0007669"/>
    <property type="project" value="UniProtKB-SubCell"/>
</dbReference>
<dbReference type="GO" id="GO:0022857">
    <property type="term" value="F:transmembrane transporter activity"/>
    <property type="evidence" value="ECO:0007669"/>
    <property type="project" value="InterPro"/>
</dbReference>
<dbReference type="CDD" id="cd06579">
    <property type="entry name" value="TM_PBP1_transp_AraH_like"/>
    <property type="match status" value="1"/>
</dbReference>
<dbReference type="InterPro" id="IPR001851">
    <property type="entry name" value="ABC_transp_permease"/>
</dbReference>
<dbReference type="PANTHER" id="PTHR32196">
    <property type="entry name" value="ABC TRANSPORTER PERMEASE PROTEIN YPHD-RELATED-RELATED"/>
    <property type="match status" value="1"/>
</dbReference>
<dbReference type="PANTHER" id="PTHR32196:SF32">
    <property type="entry name" value="XYLOSE TRANSPORT SYSTEM PERMEASE PROTEIN XYLH"/>
    <property type="match status" value="1"/>
</dbReference>
<dbReference type="Pfam" id="PF02653">
    <property type="entry name" value="BPD_transp_2"/>
    <property type="match status" value="1"/>
</dbReference>
<accession>P0AGI7</accession>
<accession>P37389</accession>
<comment type="function">
    <text evidence="1">Part of the binding-protein-dependent transport system for D-xylose. Probably responsible for the translocation of the substrate across the membrane (By similarity).</text>
</comment>
<comment type="subcellular location">
    <subcellularLocation>
        <location evidence="1">Cell inner membrane</location>
        <topology evidence="1">Multi-pass membrane protein</topology>
    </subcellularLocation>
</comment>
<comment type="similarity">
    <text evidence="3">Belongs to the binding-protein-dependent transport system permease family. AraH/RbsC subfamily.</text>
</comment>
<feature type="chain" id="PRO_0000060238" description="Xylose transport system permease protein XylH">
    <location>
        <begin position="1"/>
        <end position="393"/>
    </location>
</feature>
<feature type="topological domain" description="Periplasmic" evidence="2">
    <location>
        <begin position="1"/>
        <end position="24"/>
    </location>
</feature>
<feature type="transmembrane region" description="Helical" evidence="2">
    <location>
        <begin position="25"/>
        <end position="45"/>
    </location>
</feature>
<feature type="topological domain" description="Cytoplasmic" evidence="2">
    <location>
        <begin position="46"/>
        <end position="64"/>
    </location>
</feature>
<feature type="transmembrane region" description="Helical" evidence="2">
    <location>
        <begin position="65"/>
        <end position="85"/>
    </location>
</feature>
<feature type="topological domain" description="Periplasmic" evidence="2">
    <location>
        <begin position="86"/>
        <end position="102"/>
    </location>
</feature>
<feature type="transmembrane region" description="Helical" evidence="2">
    <location>
        <begin position="103"/>
        <end position="123"/>
    </location>
</feature>
<feature type="topological domain" description="Cytoplasmic" evidence="2">
    <location>
        <begin position="124"/>
        <end position="135"/>
    </location>
</feature>
<feature type="transmembrane region" description="Helical" evidence="2">
    <location>
        <begin position="136"/>
        <end position="156"/>
    </location>
</feature>
<feature type="topological domain" description="Periplasmic" evidence="2">
    <location>
        <begin position="157"/>
        <end position="175"/>
    </location>
</feature>
<feature type="transmembrane region" description="Helical" evidence="2">
    <location>
        <begin position="176"/>
        <end position="196"/>
    </location>
</feature>
<feature type="topological domain" description="Cytoplasmic" evidence="2">
    <location>
        <begin position="197"/>
        <end position="214"/>
    </location>
</feature>
<feature type="transmembrane region" description="Helical" evidence="2">
    <location>
        <begin position="215"/>
        <end position="235"/>
    </location>
</feature>
<feature type="topological domain" description="Periplasmic" evidence="2">
    <location>
        <begin position="236"/>
        <end position="239"/>
    </location>
</feature>
<feature type="transmembrane region" description="Helical" evidence="2">
    <location>
        <begin position="240"/>
        <end position="260"/>
    </location>
</feature>
<feature type="topological domain" description="Cytoplasmic" evidence="2">
    <location>
        <begin position="261"/>
        <end position="287"/>
    </location>
</feature>
<feature type="transmembrane region" description="Helical" evidence="2">
    <location>
        <begin position="288"/>
        <end position="308"/>
    </location>
</feature>
<feature type="topological domain" description="Periplasmic" evidence="2">
    <location>
        <begin position="309"/>
        <end position="312"/>
    </location>
</feature>
<feature type="transmembrane region" description="Helical" evidence="2">
    <location>
        <begin position="313"/>
        <end position="333"/>
    </location>
</feature>
<feature type="topological domain" description="Cytoplasmic" evidence="2">
    <location>
        <begin position="334"/>
        <end position="336"/>
    </location>
</feature>
<feature type="transmembrane region" description="Helical" evidence="2">
    <location>
        <begin position="337"/>
        <end position="357"/>
    </location>
</feature>
<feature type="topological domain" description="Periplasmic" evidence="2">
    <location>
        <begin position="358"/>
        <end position="365"/>
    </location>
</feature>
<feature type="transmembrane region" description="Helical" evidence="2">
    <location>
        <begin position="366"/>
        <end position="386"/>
    </location>
</feature>
<feature type="topological domain" description="Cytoplasmic" evidence="2">
    <location>
        <begin position="387"/>
        <end position="393"/>
    </location>
</feature>
<sequence length="393" mass="41031">MSKSNPSEVKLAVPTSGGFSGLKSLNLQVFVMIAAIIAIMLFFTWTTDGAYLSARNVSNLLRQTAITGILAVGMVFVIISAEIDLSVGSMMGLLGGVAAICDVWLGWPLPLTIIVTLVLGLLLGAWNGWWVAYRKVPSFIVTLAGMLAFRGILIGITNGTTVSPTSAAMSQIGQSYLPASTGFIIGALGLMAFVGWQWRGRMRRQALGLQSPASTAVVGRQALTAIIVLGAIWLLNDYRGVPTPVLLLTLLLLGGMFMATRTAFGRRIYAIGGNLEAARLSGINVERTKLAVFAINGLMVAIAGLILSSRLGAGSPSAGNIAELDAIAACVIGGTSLAGGVGSVAGAVMGAFIMASLDNGMSMMDVPTFWQYIVKGAILLLAVWMDSATKRRS</sequence>
<name>XYLH_SHIFL</name>